<reference key="1">
    <citation type="journal article" date="2003" name="Nat. Biotechnol.">
        <title>The genome sequence of the entomopathogenic bacterium Photorhabdus luminescens.</title>
        <authorList>
            <person name="Duchaud E."/>
            <person name="Rusniok C."/>
            <person name="Frangeul L."/>
            <person name="Buchrieser C."/>
            <person name="Givaudan A."/>
            <person name="Taourit S."/>
            <person name="Bocs S."/>
            <person name="Boursaux-Eude C."/>
            <person name="Chandler M."/>
            <person name="Charles J.-F."/>
            <person name="Dassa E."/>
            <person name="Derose R."/>
            <person name="Derzelle S."/>
            <person name="Freyssinet G."/>
            <person name="Gaudriault S."/>
            <person name="Medigue C."/>
            <person name="Lanois A."/>
            <person name="Powell K."/>
            <person name="Siguier P."/>
            <person name="Vincent R."/>
            <person name="Wingate V."/>
            <person name="Zouine M."/>
            <person name="Glaser P."/>
            <person name="Boemare N."/>
            <person name="Danchin A."/>
            <person name="Kunst F."/>
        </authorList>
    </citation>
    <scope>NUCLEOTIDE SEQUENCE [LARGE SCALE GENOMIC DNA]</scope>
    <source>
        <strain>DSM 15139 / CIP 105565 / TT01</strain>
    </source>
</reference>
<reference key="2">
    <citation type="journal article" date="2004" name="J. Bacteriol.">
        <title>The PhoP-PhoQ two-component regulatory system of Photorhabdus luminescens is essential for virulence in insects.</title>
        <authorList>
            <person name="Derzelle S."/>
            <person name="Turlin E."/>
            <person name="Duchaud E."/>
            <person name="Pages S."/>
            <person name="Kunst F."/>
            <person name="Givaudan A."/>
            <person name="Danchin A."/>
        </authorList>
    </citation>
    <scope>REGULATION BY PHOP AND PHOQ</scope>
</reference>
<name>ARNC_PHOLL</name>
<gene>
    <name evidence="1" type="primary">arnC</name>
    <name type="synonym">pbgP</name>
    <name type="synonym">pmrF</name>
    <name type="ordered locus">plu2659</name>
</gene>
<comment type="function">
    <text evidence="1">Catalyzes the transfer of 4-deoxy-4-formamido-L-arabinose from UDP to undecaprenyl phosphate. The modified arabinose is attached to lipid A and is required for resistance to polymyxin and cationic antimicrobial peptides (By similarity). Essential for virulence in insects.</text>
</comment>
<comment type="catalytic activity">
    <reaction evidence="1">
        <text>UDP-4-deoxy-4-formamido-beta-L-arabinose + di-trans,octa-cis-undecaprenyl phosphate = 4-deoxy-4-formamido-alpha-L-arabinopyranosyl di-trans,octa-cis-undecaprenyl phosphate + UDP</text>
        <dbReference type="Rhea" id="RHEA:27722"/>
        <dbReference type="ChEBI" id="CHEBI:58223"/>
        <dbReference type="ChEBI" id="CHEBI:58709"/>
        <dbReference type="ChEBI" id="CHEBI:58909"/>
        <dbReference type="ChEBI" id="CHEBI:60392"/>
        <dbReference type="EC" id="2.4.2.53"/>
    </reaction>
</comment>
<comment type="pathway">
    <text evidence="1">Glycolipid biosynthesis; 4-amino-4-deoxy-alpha-L-arabinose undecaprenyl phosphate biosynthesis; 4-amino-4-deoxy-alpha-L-arabinose undecaprenyl phosphate from UDP-4-deoxy-4-formamido-beta-L-arabinose and undecaprenyl phosphate: step 1/2.</text>
</comment>
<comment type="pathway">
    <text evidence="1">Bacterial outer membrane biogenesis; lipopolysaccharide biosynthesis.</text>
</comment>
<comment type="subcellular location">
    <subcellularLocation>
        <location evidence="1">Cell inner membrane</location>
        <topology evidence="1">Multi-pass membrane protein</topology>
    </subcellularLocation>
</comment>
<comment type="induction">
    <text>Activated by low magnesium concentrations, via the two-component regulatory system PhoP/PhoQ.</text>
</comment>
<comment type="similarity">
    <text evidence="1">Belongs to the glycosyltransferase 2 family.</text>
</comment>
<accession>Q7N3Q6</accession>
<evidence type="ECO:0000255" key="1">
    <source>
        <dbReference type="HAMAP-Rule" id="MF_01164"/>
    </source>
</evidence>
<protein>
    <recommendedName>
        <fullName evidence="1">Undecaprenyl-phosphate 4-deoxy-4-formamido-L-arabinose transferase</fullName>
        <ecNumber evidence="1">2.4.2.53</ecNumber>
    </recommendedName>
    <alternativeName>
        <fullName>Polymyxin resistance protein PmrF</fullName>
    </alternativeName>
    <alternativeName>
        <fullName evidence="1">Undecaprenyl-phosphate Ara4FN transferase</fullName>
        <shortName evidence="1">Ara4FN transferase</shortName>
    </alternativeName>
</protein>
<proteinExistence type="evidence at transcript level"/>
<keyword id="KW-0046">Antibiotic resistance</keyword>
<keyword id="KW-0997">Cell inner membrane</keyword>
<keyword id="KW-1003">Cell membrane</keyword>
<keyword id="KW-0328">Glycosyltransferase</keyword>
<keyword id="KW-0441">Lipid A biosynthesis</keyword>
<keyword id="KW-0444">Lipid biosynthesis</keyword>
<keyword id="KW-0443">Lipid metabolism</keyword>
<keyword id="KW-0448">Lipopolysaccharide biosynthesis</keyword>
<keyword id="KW-0472">Membrane</keyword>
<keyword id="KW-1185">Reference proteome</keyword>
<keyword id="KW-0808">Transferase</keyword>
<keyword id="KW-0812">Transmembrane</keyword>
<keyword id="KW-1133">Transmembrane helix</keyword>
<feature type="chain" id="PRO_0000059199" description="Undecaprenyl-phosphate 4-deoxy-4-formamido-L-arabinose transferase">
    <location>
        <begin position="1"/>
        <end position="325"/>
    </location>
</feature>
<feature type="transmembrane region" description="Helical" evidence="1">
    <location>
        <begin position="235"/>
        <end position="255"/>
    </location>
</feature>
<feature type="transmembrane region" description="Helical" evidence="1">
    <location>
        <begin position="269"/>
        <end position="291"/>
    </location>
</feature>
<dbReference type="EC" id="2.4.2.53" evidence="1"/>
<dbReference type="EMBL" id="BX571867">
    <property type="protein sequence ID" value="CAE15033.1"/>
    <property type="molecule type" value="Genomic_DNA"/>
</dbReference>
<dbReference type="RefSeq" id="WP_011146881.1">
    <property type="nucleotide sequence ID" value="NC_005126.1"/>
</dbReference>
<dbReference type="SMR" id="Q7N3Q6"/>
<dbReference type="STRING" id="243265.plu2659"/>
<dbReference type="CAZy" id="GT2">
    <property type="family name" value="Glycosyltransferase Family 2"/>
</dbReference>
<dbReference type="GeneID" id="48848922"/>
<dbReference type="KEGG" id="plu:plu2659"/>
<dbReference type="eggNOG" id="COG0463">
    <property type="taxonomic scope" value="Bacteria"/>
</dbReference>
<dbReference type="HOGENOM" id="CLU_033536_0_0_6"/>
<dbReference type="OrthoDB" id="9811884at2"/>
<dbReference type="UniPathway" id="UPA00030"/>
<dbReference type="UniPathway" id="UPA00036">
    <property type="reaction ID" value="UER00495"/>
</dbReference>
<dbReference type="Proteomes" id="UP000002514">
    <property type="component" value="Chromosome"/>
</dbReference>
<dbReference type="GO" id="GO:0005886">
    <property type="term" value="C:plasma membrane"/>
    <property type="evidence" value="ECO:0007669"/>
    <property type="project" value="UniProtKB-SubCell"/>
</dbReference>
<dbReference type="GO" id="GO:0016780">
    <property type="term" value="F:phosphotransferase activity, for other substituted phosphate groups"/>
    <property type="evidence" value="ECO:0007669"/>
    <property type="project" value="UniProtKB-UniRule"/>
</dbReference>
<dbReference type="GO" id="GO:0099621">
    <property type="term" value="F:undecaprenyl-phosphate 4-deoxy-4-formamido-L-arabinose transferase activity"/>
    <property type="evidence" value="ECO:0007669"/>
    <property type="project" value="UniProtKB-EC"/>
</dbReference>
<dbReference type="GO" id="GO:0036108">
    <property type="term" value="P:4-amino-4-deoxy-alpha-L-arabinopyranosyl undecaprenyl phosphate biosynthetic process"/>
    <property type="evidence" value="ECO:0007669"/>
    <property type="project" value="UniProtKB-UniRule"/>
</dbReference>
<dbReference type="GO" id="GO:0009245">
    <property type="term" value="P:lipid A biosynthetic process"/>
    <property type="evidence" value="ECO:0007669"/>
    <property type="project" value="UniProtKB-UniRule"/>
</dbReference>
<dbReference type="GO" id="GO:0009103">
    <property type="term" value="P:lipopolysaccharide biosynthetic process"/>
    <property type="evidence" value="ECO:0007669"/>
    <property type="project" value="UniProtKB-UniRule"/>
</dbReference>
<dbReference type="GO" id="GO:0046677">
    <property type="term" value="P:response to antibiotic"/>
    <property type="evidence" value="ECO:0007669"/>
    <property type="project" value="UniProtKB-KW"/>
</dbReference>
<dbReference type="CDD" id="cd04187">
    <property type="entry name" value="DPM1_like_bac"/>
    <property type="match status" value="1"/>
</dbReference>
<dbReference type="FunFam" id="3.90.550.10:FF:000019">
    <property type="entry name" value="Undecaprenyl-phosphate 4-deoxy-4-formamido-L-arabinose transferase"/>
    <property type="match status" value="1"/>
</dbReference>
<dbReference type="Gene3D" id="3.90.550.10">
    <property type="entry name" value="Spore Coat Polysaccharide Biosynthesis Protein SpsA, Chain A"/>
    <property type="match status" value="1"/>
</dbReference>
<dbReference type="HAMAP" id="MF_01164">
    <property type="entry name" value="ArnC_transfer"/>
    <property type="match status" value="1"/>
</dbReference>
<dbReference type="InterPro" id="IPR022857">
    <property type="entry name" value="ArnC_tfrase"/>
</dbReference>
<dbReference type="InterPro" id="IPR001173">
    <property type="entry name" value="Glyco_trans_2-like"/>
</dbReference>
<dbReference type="InterPro" id="IPR050256">
    <property type="entry name" value="Glycosyltransferase_2"/>
</dbReference>
<dbReference type="InterPro" id="IPR029044">
    <property type="entry name" value="Nucleotide-diphossugar_trans"/>
</dbReference>
<dbReference type="NCBIfam" id="NF007986">
    <property type="entry name" value="PRK10714.1"/>
    <property type="match status" value="1"/>
</dbReference>
<dbReference type="PANTHER" id="PTHR48090:SF3">
    <property type="entry name" value="UNDECAPRENYL-PHOSPHATE 4-DEOXY-4-FORMAMIDO-L-ARABINOSE TRANSFERASE"/>
    <property type="match status" value="1"/>
</dbReference>
<dbReference type="PANTHER" id="PTHR48090">
    <property type="entry name" value="UNDECAPRENYL-PHOSPHATE 4-DEOXY-4-FORMAMIDO-L-ARABINOSE TRANSFERASE-RELATED"/>
    <property type="match status" value="1"/>
</dbReference>
<dbReference type="Pfam" id="PF00535">
    <property type="entry name" value="Glycos_transf_2"/>
    <property type="match status" value="1"/>
</dbReference>
<dbReference type="SUPFAM" id="SSF53448">
    <property type="entry name" value="Nucleotide-diphospho-sugar transferases"/>
    <property type="match status" value="1"/>
</dbReference>
<organism>
    <name type="scientific">Photorhabdus laumondii subsp. laumondii (strain DSM 15139 / CIP 105565 / TT01)</name>
    <name type="common">Photorhabdus luminescens subsp. laumondii</name>
    <dbReference type="NCBI Taxonomy" id="243265"/>
    <lineage>
        <taxon>Bacteria</taxon>
        <taxon>Pseudomonadati</taxon>
        <taxon>Pseudomonadota</taxon>
        <taxon>Gammaproteobacteria</taxon>
        <taxon>Enterobacterales</taxon>
        <taxon>Morganellaceae</taxon>
        <taxon>Photorhabdus</taxon>
    </lineage>
</organism>
<sequence length="325" mass="36520">MSFEQIKKVSVVIPIYNEEESLPLLLERTLAACKQLTQEYELILVDDGSSDKSAEILIQAAEQPENHIIAILLNRNYGQHSAIMAGFNQVNGDLIITLDADLQNPPEEIPRLVKTAEQGYDVVGTRRANRQDSLFRKTASKIINAMITKATGRSMGDYGCMLRAYRRHIVEAMLQCHERSTFIPILANTFARKTIEIDVAHAEREFGDSKYSFMKLINLMYDLLTCLTTAPLRLLSVVGSVIAVSGFLLAVLLMVLRLIFGAIWAAEGVFTLFALLFIFIGAQFVAMGLLGEYIGRIYNDVRARPRYFIQKVVGDNKTNDNQEEY</sequence>